<dbReference type="EC" id="5.4.99.12" evidence="1"/>
<dbReference type="EMBL" id="CP000529">
    <property type="protein sequence ID" value="ABM38343.1"/>
    <property type="molecule type" value="Genomic_DNA"/>
</dbReference>
<dbReference type="RefSeq" id="WP_011802415.1">
    <property type="nucleotide sequence ID" value="NC_008781.1"/>
</dbReference>
<dbReference type="SMR" id="A1VRR5"/>
<dbReference type="STRING" id="365044.Pnap_3044"/>
<dbReference type="KEGG" id="pna:Pnap_3044"/>
<dbReference type="eggNOG" id="COG0101">
    <property type="taxonomic scope" value="Bacteria"/>
</dbReference>
<dbReference type="HOGENOM" id="CLU_014673_0_2_4"/>
<dbReference type="OrthoDB" id="9811823at2"/>
<dbReference type="Proteomes" id="UP000000644">
    <property type="component" value="Chromosome"/>
</dbReference>
<dbReference type="GO" id="GO:0003723">
    <property type="term" value="F:RNA binding"/>
    <property type="evidence" value="ECO:0007669"/>
    <property type="project" value="InterPro"/>
</dbReference>
<dbReference type="GO" id="GO:0160147">
    <property type="term" value="F:tRNA pseudouridine(38-40) synthase activity"/>
    <property type="evidence" value="ECO:0007669"/>
    <property type="project" value="UniProtKB-EC"/>
</dbReference>
<dbReference type="GO" id="GO:0031119">
    <property type="term" value="P:tRNA pseudouridine synthesis"/>
    <property type="evidence" value="ECO:0007669"/>
    <property type="project" value="UniProtKB-UniRule"/>
</dbReference>
<dbReference type="CDD" id="cd02570">
    <property type="entry name" value="PseudoU_synth_EcTruA"/>
    <property type="match status" value="1"/>
</dbReference>
<dbReference type="FunFam" id="3.30.70.580:FF:000001">
    <property type="entry name" value="tRNA pseudouridine synthase A"/>
    <property type="match status" value="1"/>
</dbReference>
<dbReference type="Gene3D" id="3.30.70.660">
    <property type="entry name" value="Pseudouridine synthase I, catalytic domain, C-terminal subdomain"/>
    <property type="match status" value="1"/>
</dbReference>
<dbReference type="Gene3D" id="3.30.70.580">
    <property type="entry name" value="Pseudouridine synthase I, catalytic domain, N-terminal subdomain"/>
    <property type="match status" value="1"/>
</dbReference>
<dbReference type="HAMAP" id="MF_00171">
    <property type="entry name" value="TruA"/>
    <property type="match status" value="1"/>
</dbReference>
<dbReference type="InterPro" id="IPR020103">
    <property type="entry name" value="PsdUridine_synth_cat_dom_sf"/>
</dbReference>
<dbReference type="InterPro" id="IPR001406">
    <property type="entry name" value="PsdUridine_synth_TruA"/>
</dbReference>
<dbReference type="InterPro" id="IPR020097">
    <property type="entry name" value="PsdUridine_synth_TruA_a/b_dom"/>
</dbReference>
<dbReference type="InterPro" id="IPR020095">
    <property type="entry name" value="PsdUridine_synth_TruA_C"/>
</dbReference>
<dbReference type="InterPro" id="IPR020094">
    <property type="entry name" value="TruA/RsuA/RluB/E/F_N"/>
</dbReference>
<dbReference type="NCBIfam" id="TIGR00071">
    <property type="entry name" value="hisT_truA"/>
    <property type="match status" value="1"/>
</dbReference>
<dbReference type="PANTHER" id="PTHR11142">
    <property type="entry name" value="PSEUDOURIDYLATE SYNTHASE"/>
    <property type="match status" value="1"/>
</dbReference>
<dbReference type="PANTHER" id="PTHR11142:SF0">
    <property type="entry name" value="TRNA PSEUDOURIDINE SYNTHASE-LIKE 1"/>
    <property type="match status" value="1"/>
</dbReference>
<dbReference type="Pfam" id="PF01416">
    <property type="entry name" value="PseudoU_synth_1"/>
    <property type="match status" value="2"/>
</dbReference>
<dbReference type="PIRSF" id="PIRSF001430">
    <property type="entry name" value="tRNA_psdUrid_synth"/>
    <property type="match status" value="1"/>
</dbReference>
<dbReference type="SUPFAM" id="SSF55120">
    <property type="entry name" value="Pseudouridine synthase"/>
    <property type="match status" value="1"/>
</dbReference>
<name>TRUA_POLNA</name>
<gene>
    <name evidence="1" type="primary">truA</name>
    <name type="ordered locus">Pnap_3044</name>
</gene>
<comment type="function">
    <text evidence="1">Formation of pseudouridine at positions 38, 39 and 40 in the anticodon stem and loop of transfer RNAs.</text>
</comment>
<comment type="catalytic activity">
    <reaction evidence="1">
        <text>uridine(38/39/40) in tRNA = pseudouridine(38/39/40) in tRNA</text>
        <dbReference type="Rhea" id="RHEA:22376"/>
        <dbReference type="Rhea" id="RHEA-COMP:10085"/>
        <dbReference type="Rhea" id="RHEA-COMP:10087"/>
        <dbReference type="ChEBI" id="CHEBI:65314"/>
        <dbReference type="ChEBI" id="CHEBI:65315"/>
        <dbReference type="EC" id="5.4.99.12"/>
    </reaction>
</comment>
<comment type="subunit">
    <text evidence="1">Homodimer.</text>
</comment>
<comment type="similarity">
    <text evidence="1">Belongs to the tRNA pseudouridine synthase TruA family.</text>
</comment>
<organism>
    <name type="scientific">Polaromonas naphthalenivorans (strain CJ2)</name>
    <dbReference type="NCBI Taxonomy" id="365044"/>
    <lineage>
        <taxon>Bacteria</taxon>
        <taxon>Pseudomonadati</taxon>
        <taxon>Pseudomonadota</taxon>
        <taxon>Betaproteobacteria</taxon>
        <taxon>Burkholderiales</taxon>
        <taxon>Comamonadaceae</taxon>
        <taxon>Polaromonas</taxon>
    </lineage>
</organism>
<protein>
    <recommendedName>
        <fullName evidence="1">tRNA pseudouridine synthase A</fullName>
        <ecNumber evidence="1">5.4.99.12</ecNumber>
    </recommendedName>
    <alternativeName>
        <fullName evidence="1">tRNA pseudouridine(38-40) synthase</fullName>
    </alternativeName>
    <alternativeName>
        <fullName evidence="1">tRNA pseudouridylate synthase I</fullName>
    </alternativeName>
    <alternativeName>
        <fullName evidence="1">tRNA-uridine isomerase I</fullName>
    </alternativeName>
</protein>
<accession>A1VRR5</accession>
<sequence>MRIALGISYSGSAYEGWQSQLSGKTVQDKLELALSRFAVQPIRVMCAGRTDAGVHALMQVVHFDTPLQRETSSWVRGTNAFLPSDIAVQWAQPVPDEFHSRASAIARRYAYVVLESPVRPSVEAGRVGWVYRPLDGDAMRQAALHLMGEHDFSSFRAAQCQAKSPVKTMSRIEISQRAGPGSRYWRFEFEANAFLHHMIRNIMGCLLAIGQGNHPPEWLAEVVAARRRDAAAPTFSPDGLYFLGPVYEERHGLPSRTAAYDWLP</sequence>
<proteinExistence type="inferred from homology"/>
<evidence type="ECO:0000255" key="1">
    <source>
        <dbReference type="HAMAP-Rule" id="MF_00171"/>
    </source>
</evidence>
<reference key="1">
    <citation type="journal article" date="2009" name="Environ. Microbiol.">
        <title>The genome of Polaromonas naphthalenivorans strain CJ2, isolated from coal tar-contaminated sediment, reveals physiological and metabolic versatility and evolution through extensive horizontal gene transfer.</title>
        <authorList>
            <person name="Yagi J.M."/>
            <person name="Sims D."/>
            <person name="Brettin T."/>
            <person name="Bruce D."/>
            <person name="Madsen E.L."/>
        </authorList>
    </citation>
    <scope>NUCLEOTIDE SEQUENCE [LARGE SCALE GENOMIC DNA]</scope>
    <source>
        <strain>CJ2</strain>
    </source>
</reference>
<keyword id="KW-0413">Isomerase</keyword>
<keyword id="KW-1185">Reference proteome</keyword>
<keyword id="KW-0819">tRNA processing</keyword>
<feature type="chain" id="PRO_1000017134" description="tRNA pseudouridine synthase A">
    <location>
        <begin position="1"/>
        <end position="264"/>
    </location>
</feature>
<feature type="active site" description="Nucleophile" evidence="1">
    <location>
        <position position="51"/>
    </location>
</feature>
<feature type="binding site" evidence="1">
    <location>
        <position position="109"/>
    </location>
    <ligand>
        <name>substrate</name>
    </ligand>
</feature>